<dbReference type="EC" id="5.3.1.6" evidence="1"/>
<dbReference type="EMBL" id="AL445065">
    <property type="protein sequence ID" value="CAC12007.1"/>
    <property type="molecule type" value="Genomic_DNA"/>
</dbReference>
<dbReference type="RefSeq" id="WP_010901288.1">
    <property type="nucleotide sequence ID" value="NC_002578.1"/>
</dbReference>
<dbReference type="SMR" id="Q9HJT5"/>
<dbReference type="FunCoup" id="Q9HJT5">
    <property type="interactions" value="243"/>
</dbReference>
<dbReference type="STRING" id="273075.gene:9572092"/>
<dbReference type="PaxDb" id="273075-Ta0878"/>
<dbReference type="EnsemblBacteria" id="CAC12007">
    <property type="protein sequence ID" value="CAC12007"/>
    <property type="gene ID" value="CAC12007"/>
</dbReference>
<dbReference type="KEGG" id="tac:Ta0878"/>
<dbReference type="eggNOG" id="arCOG01122">
    <property type="taxonomic scope" value="Archaea"/>
</dbReference>
<dbReference type="HOGENOM" id="CLU_056590_1_0_2"/>
<dbReference type="InParanoid" id="Q9HJT5"/>
<dbReference type="OrthoDB" id="19013at2157"/>
<dbReference type="UniPathway" id="UPA00115">
    <property type="reaction ID" value="UER00412"/>
</dbReference>
<dbReference type="Proteomes" id="UP000001024">
    <property type="component" value="Chromosome"/>
</dbReference>
<dbReference type="GO" id="GO:0005829">
    <property type="term" value="C:cytosol"/>
    <property type="evidence" value="ECO:0007669"/>
    <property type="project" value="TreeGrafter"/>
</dbReference>
<dbReference type="GO" id="GO:0004751">
    <property type="term" value="F:ribose-5-phosphate isomerase activity"/>
    <property type="evidence" value="ECO:0007669"/>
    <property type="project" value="UniProtKB-UniRule"/>
</dbReference>
<dbReference type="GO" id="GO:0006014">
    <property type="term" value="P:D-ribose metabolic process"/>
    <property type="evidence" value="ECO:0007669"/>
    <property type="project" value="TreeGrafter"/>
</dbReference>
<dbReference type="GO" id="GO:0009052">
    <property type="term" value="P:pentose-phosphate shunt, non-oxidative branch"/>
    <property type="evidence" value="ECO:0007669"/>
    <property type="project" value="UniProtKB-UniRule"/>
</dbReference>
<dbReference type="CDD" id="cd01398">
    <property type="entry name" value="RPI_A"/>
    <property type="match status" value="1"/>
</dbReference>
<dbReference type="FunFam" id="3.40.50.1360:FF:000001">
    <property type="entry name" value="Ribose-5-phosphate isomerase A"/>
    <property type="match status" value="1"/>
</dbReference>
<dbReference type="Gene3D" id="3.30.70.260">
    <property type="match status" value="1"/>
</dbReference>
<dbReference type="Gene3D" id="3.40.50.1360">
    <property type="match status" value="1"/>
</dbReference>
<dbReference type="HAMAP" id="MF_00170">
    <property type="entry name" value="Rib_5P_isom_A"/>
    <property type="match status" value="1"/>
</dbReference>
<dbReference type="InterPro" id="IPR037171">
    <property type="entry name" value="NagB/RpiA_transferase-like"/>
</dbReference>
<dbReference type="InterPro" id="IPR020672">
    <property type="entry name" value="Ribose5P_isomerase_typA_subgr"/>
</dbReference>
<dbReference type="InterPro" id="IPR004788">
    <property type="entry name" value="Ribose5P_isomerase_type_A"/>
</dbReference>
<dbReference type="NCBIfam" id="NF001924">
    <property type="entry name" value="PRK00702.1"/>
    <property type="match status" value="1"/>
</dbReference>
<dbReference type="NCBIfam" id="TIGR00021">
    <property type="entry name" value="rpiA"/>
    <property type="match status" value="1"/>
</dbReference>
<dbReference type="PANTHER" id="PTHR11934">
    <property type="entry name" value="RIBOSE-5-PHOSPHATE ISOMERASE"/>
    <property type="match status" value="1"/>
</dbReference>
<dbReference type="PANTHER" id="PTHR11934:SF0">
    <property type="entry name" value="RIBOSE-5-PHOSPHATE ISOMERASE"/>
    <property type="match status" value="1"/>
</dbReference>
<dbReference type="Pfam" id="PF06026">
    <property type="entry name" value="Rib_5-P_isom_A"/>
    <property type="match status" value="1"/>
</dbReference>
<dbReference type="SUPFAM" id="SSF75445">
    <property type="entry name" value="D-ribose-5-phosphate isomerase (RpiA), lid domain"/>
    <property type="match status" value="1"/>
</dbReference>
<dbReference type="SUPFAM" id="SSF100950">
    <property type="entry name" value="NagB/RpiA/CoA transferase-like"/>
    <property type="match status" value="1"/>
</dbReference>
<reference key="1">
    <citation type="journal article" date="2000" name="Nature">
        <title>The genome sequence of the thermoacidophilic scavenger Thermoplasma acidophilum.</title>
        <authorList>
            <person name="Ruepp A."/>
            <person name="Graml W."/>
            <person name="Santos-Martinez M.-L."/>
            <person name="Koretke K.K."/>
            <person name="Volker C."/>
            <person name="Mewes H.-W."/>
            <person name="Frishman D."/>
            <person name="Stocker S."/>
            <person name="Lupas A.N."/>
            <person name="Baumeister W."/>
        </authorList>
    </citation>
    <scope>NUCLEOTIDE SEQUENCE [LARGE SCALE GENOMIC DNA]</scope>
    <source>
        <strain>ATCC 25905 / DSM 1728 / JCM 9062 / NBRC 15155 / AMRC-C165</strain>
    </source>
</reference>
<accession>Q9HJT5</accession>
<name>RPIA_THEAC</name>
<gene>
    <name evidence="1" type="primary">rpiA</name>
    <name type="ordered locus">Ta0878</name>
</gene>
<sequence length="241" mass="26729">MADYEKQKMNAAIKAAEYVRSGMIVGLGTGTTSYYLINEIGRRVREEGLKIRAVCTSRRTEDLAKQNGIEVIQGTKDQIDLTIDGADQVGMYGTLIKGGGGALLREKIVAYNSKEMYVIVDSRKIEAAHFGSFPLPVEIVPFMHMRTLENLRGICTQTDLRMNEKGEPFVTDNGNYIADMHMGMIDDPINLERSLKSIPGVVEVGLFNGIAKRIFEGTDEGCNIYSITNSGIKKEEVYFDP</sequence>
<feature type="chain" id="PRO_0000158519" description="Ribose-5-phosphate isomerase A">
    <location>
        <begin position="1"/>
        <end position="241"/>
    </location>
</feature>
<feature type="active site" description="Proton acceptor" evidence="1">
    <location>
        <position position="106"/>
    </location>
</feature>
<feature type="binding site" evidence="1">
    <location>
        <begin position="29"/>
        <end position="32"/>
    </location>
    <ligand>
        <name>substrate</name>
    </ligand>
</feature>
<feature type="binding site" evidence="1">
    <location>
        <begin position="84"/>
        <end position="87"/>
    </location>
    <ligand>
        <name>substrate</name>
    </ligand>
</feature>
<feature type="binding site" evidence="1">
    <location>
        <begin position="97"/>
        <end position="100"/>
    </location>
    <ligand>
        <name>substrate</name>
    </ligand>
</feature>
<feature type="binding site" evidence="1">
    <location>
        <position position="124"/>
    </location>
    <ligand>
        <name>substrate</name>
    </ligand>
</feature>
<keyword id="KW-0413">Isomerase</keyword>
<keyword id="KW-1185">Reference proteome</keyword>
<proteinExistence type="inferred from homology"/>
<comment type="function">
    <text evidence="1">Catalyzes the reversible conversion of ribose-5-phosphate to ribulose 5-phosphate.</text>
</comment>
<comment type="catalytic activity">
    <reaction evidence="1">
        <text>aldehydo-D-ribose 5-phosphate = D-ribulose 5-phosphate</text>
        <dbReference type="Rhea" id="RHEA:14657"/>
        <dbReference type="ChEBI" id="CHEBI:58121"/>
        <dbReference type="ChEBI" id="CHEBI:58273"/>
        <dbReference type="EC" id="5.3.1.6"/>
    </reaction>
</comment>
<comment type="pathway">
    <text evidence="1">Carbohydrate degradation; pentose phosphate pathway; D-ribose 5-phosphate from D-ribulose 5-phosphate (non-oxidative stage): step 1/1.</text>
</comment>
<comment type="subunit">
    <text evidence="1">Homodimer.</text>
</comment>
<comment type="similarity">
    <text evidence="1">Belongs to the ribose 5-phosphate isomerase family.</text>
</comment>
<organism>
    <name type="scientific">Thermoplasma acidophilum (strain ATCC 25905 / DSM 1728 / JCM 9062 / NBRC 15155 / AMRC-C165)</name>
    <dbReference type="NCBI Taxonomy" id="273075"/>
    <lineage>
        <taxon>Archaea</taxon>
        <taxon>Methanobacteriati</taxon>
        <taxon>Thermoplasmatota</taxon>
        <taxon>Thermoplasmata</taxon>
        <taxon>Thermoplasmatales</taxon>
        <taxon>Thermoplasmataceae</taxon>
        <taxon>Thermoplasma</taxon>
    </lineage>
</organism>
<evidence type="ECO:0000255" key="1">
    <source>
        <dbReference type="HAMAP-Rule" id="MF_00170"/>
    </source>
</evidence>
<protein>
    <recommendedName>
        <fullName evidence="1">Ribose-5-phosphate isomerase A</fullName>
        <ecNumber evidence="1">5.3.1.6</ecNumber>
    </recommendedName>
    <alternativeName>
        <fullName evidence="1">Phosphoriboisomerase A</fullName>
        <shortName evidence="1">PRI</shortName>
    </alternativeName>
</protein>